<organism evidence="4">
    <name type="scientific">Plasmodium chabaudi chabaudi</name>
    <dbReference type="NCBI Taxonomy" id="31271"/>
    <lineage>
        <taxon>Eukaryota</taxon>
        <taxon>Sar</taxon>
        <taxon>Alveolata</taxon>
        <taxon>Apicomplexa</taxon>
        <taxon>Aconoidasida</taxon>
        <taxon>Haemosporida</taxon>
        <taxon>Plasmodiidae</taxon>
        <taxon>Plasmodium</taxon>
        <taxon>Plasmodium (Vinckeia)</taxon>
    </lineage>
</organism>
<reference evidence="4" key="1">
    <citation type="journal article" date="2014" name="BMC Biol.">
        <title>A comprehensive evaluation of rodent malaria parasite genomes and gene expression.</title>
        <authorList>
            <person name="Otto T.D."/>
            <person name="Bohme U."/>
            <person name="Jackson A.P."/>
            <person name="Hunt M."/>
            <person name="Franke-Fayard B."/>
            <person name="Hoeijmakers W.A."/>
            <person name="Religa A.A."/>
            <person name="Robertson L."/>
            <person name="Sanders M."/>
            <person name="Ogun S.A."/>
            <person name="Cunningham D."/>
            <person name="Erhart A."/>
            <person name="Billker O."/>
            <person name="Khan S.M."/>
            <person name="Stunnenberg H.G."/>
            <person name="Langhorne J."/>
            <person name="Holder A.A."/>
            <person name="Waters A.P."/>
            <person name="Newbold C.I."/>
            <person name="Pain A."/>
            <person name="Berriman M."/>
            <person name="Janse C.J."/>
        </authorList>
    </citation>
    <scope>NUCLEOTIDE SEQUENCE [LARGE SCALE GENOMIC DNA]</scope>
    <source>
        <strain evidence="4">AS</strain>
    </source>
</reference>
<gene>
    <name type="primary">TCTP</name>
    <name type="ORF">PC300975.00.0</name>
    <name evidence="3" type="ORF">PCHAS_1110200</name>
</gene>
<feature type="chain" id="PRO_0000211290" description="Translationally-controlled tumor protein homolog">
    <location>
        <begin position="1"/>
        <end position="171"/>
    </location>
</feature>
<feature type="domain" description="TCTP" evidence="2">
    <location>
        <begin position="1"/>
        <end position="171"/>
    </location>
</feature>
<name>TCTP_PLACU</name>
<protein>
    <recommendedName>
        <fullName>Translationally-controlled tumor protein homolog</fullName>
        <shortName>TCTP</shortName>
    </recommendedName>
</protein>
<dbReference type="EMBL" id="LK022888">
    <property type="protein sequence ID" value="VTZ69097.1"/>
    <property type="molecule type" value="Genomic_DNA"/>
</dbReference>
<dbReference type="RefSeq" id="XP_742494.1">
    <property type="nucleotide sequence ID" value="XM_737401.1"/>
</dbReference>
<dbReference type="SMR" id="Q4XFJ8"/>
<dbReference type="GeneID" id="3495585"/>
<dbReference type="KEGG" id="pcb:PCHAS_1110200"/>
<dbReference type="VEuPathDB" id="PlasmoDB:PCHAS_1110200"/>
<dbReference type="eggNOG" id="KOG1727">
    <property type="taxonomic scope" value="Eukaryota"/>
</dbReference>
<dbReference type="HOGENOM" id="CLU_095877_0_1_1"/>
<dbReference type="OrthoDB" id="10248936at2759"/>
<dbReference type="Proteomes" id="UP000071118">
    <property type="component" value="Chromosome 11"/>
</dbReference>
<dbReference type="GO" id="GO:0005737">
    <property type="term" value="C:cytoplasm"/>
    <property type="evidence" value="ECO:0007669"/>
    <property type="project" value="UniProtKB-SubCell"/>
</dbReference>
<dbReference type="GO" id="GO:0005509">
    <property type="term" value="F:calcium ion binding"/>
    <property type="evidence" value="ECO:0007669"/>
    <property type="project" value="TreeGrafter"/>
</dbReference>
<dbReference type="Gene3D" id="2.170.150.10">
    <property type="entry name" value="Metal Binding Protein, Guanine Nucleotide Exchange Factor, Chain A"/>
    <property type="match status" value="1"/>
</dbReference>
<dbReference type="InterPro" id="IPR011057">
    <property type="entry name" value="Mss4-like_sf"/>
</dbReference>
<dbReference type="InterPro" id="IPR011323">
    <property type="entry name" value="Mss4/transl-control_tumour"/>
</dbReference>
<dbReference type="InterPro" id="IPR034737">
    <property type="entry name" value="TCTP"/>
</dbReference>
<dbReference type="InterPro" id="IPR018103">
    <property type="entry name" value="Translation_control_tumour_CS"/>
</dbReference>
<dbReference type="InterPro" id="IPR018105">
    <property type="entry name" value="Translational_control_tumour_p"/>
</dbReference>
<dbReference type="PANTHER" id="PTHR11991">
    <property type="entry name" value="TRANSLATIONALLY CONTROLLED TUMOR PROTEIN-RELATED"/>
    <property type="match status" value="1"/>
</dbReference>
<dbReference type="PANTHER" id="PTHR11991:SF0">
    <property type="entry name" value="TRANSLATIONALLY-CONTROLLED TUMOR PROTEIN"/>
    <property type="match status" value="1"/>
</dbReference>
<dbReference type="Pfam" id="PF00838">
    <property type="entry name" value="TCTP"/>
    <property type="match status" value="1"/>
</dbReference>
<dbReference type="PRINTS" id="PR01653">
    <property type="entry name" value="TCTPROTEIN"/>
</dbReference>
<dbReference type="SUPFAM" id="SSF51316">
    <property type="entry name" value="Mss4-like"/>
    <property type="match status" value="1"/>
</dbReference>
<dbReference type="PROSITE" id="PS01003">
    <property type="entry name" value="TCTP_2"/>
    <property type="match status" value="1"/>
</dbReference>
<dbReference type="PROSITE" id="PS51797">
    <property type="entry name" value="TCTP_3"/>
    <property type="match status" value="1"/>
</dbReference>
<comment type="function">
    <text evidence="1">Involved in calcium binding and microtubule stabilization.</text>
</comment>
<comment type="subcellular location">
    <subcellularLocation>
        <location evidence="1">Cytoplasm</location>
    </subcellularLocation>
</comment>
<comment type="similarity">
    <text evidence="2">Belongs to the TCTP family.</text>
</comment>
<proteinExistence type="inferred from homology"/>
<sequence length="171" mass="19887">MKVYKDIFTNDEVCSDSYAQEDPFGNPEFREIAFEVKSNKRIKGNDDYGIADNSEDAVEGMGADVEHVIDIVDSFQLTSTSLSKKEYSAYVKNFMQRILKHLEEKKPDRVEIFKTKAQPLIKHILTNFDDFEFYMGESLDMEAGLIYSYYKGEEITPRFVYISDGLFEEKY</sequence>
<accession>Q4XFJ8</accession>
<accession>A0A4V0K820</accession>
<evidence type="ECO:0000250" key="1"/>
<evidence type="ECO:0000255" key="2">
    <source>
        <dbReference type="PROSITE-ProRule" id="PRU01133"/>
    </source>
</evidence>
<evidence type="ECO:0000312" key="3">
    <source>
        <dbReference type="EMBL" id="VTZ69097.1"/>
    </source>
</evidence>
<evidence type="ECO:0000312" key="4">
    <source>
        <dbReference type="Proteomes" id="UP000071118"/>
    </source>
</evidence>
<keyword id="KW-0106">Calcium</keyword>
<keyword id="KW-0963">Cytoplasm</keyword>